<dbReference type="EMBL" id="CU329672">
    <property type="protein sequence ID" value="CAB38163.1"/>
    <property type="molecule type" value="Genomic_DNA"/>
</dbReference>
<dbReference type="PIR" id="T40955">
    <property type="entry name" value="T40955"/>
</dbReference>
<dbReference type="RefSeq" id="NP_587965.1">
    <property type="nucleotide sequence ID" value="NM_001022956.2"/>
</dbReference>
<dbReference type="SMR" id="O94719"/>
<dbReference type="BioGRID" id="275467">
    <property type="interactions" value="2"/>
</dbReference>
<dbReference type="STRING" id="284812.O94719"/>
<dbReference type="PaxDb" id="4896-SPCC1393.07c.1"/>
<dbReference type="EnsemblFungi" id="SPCC1393.07c.1">
    <property type="protein sequence ID" value="SPCC1393.07c.1:pep"/>
    <property type="gene ID" value="SPCC1393.07c"/>
</dbReference>
<dbReference type="GeneID" id="2538889"/>
<dbReference type="KEGG" id="spo:2538889"/>
<dbReference type="PomBase" id="SPCC1393.07c">
    <property type="gene designation" value="mug4"/>
</dbReference>
<dbReference type="VEuPathDB" id="FungiDB:SPCC1393.07c"/>
<dbReference type="HOGENOM" id="CLU_334676_0_0_1"/>
<dbReference type="InParanoid" id="O94719"/>
<dbReference type="OMA" id="RICEFEA"/>
<dbReference type="PRO" id="PR:O94719"/>
<dbReference type="Proteomes" id="UP000002485">
    <property type="component" value="Chromosome III"/>
</dbReference>
<dbReference type="GO" id="GO:0016020">
    <property type="term" value="C:membrane"/>
    <property type="evidence" value="ECO:0007669"/>
    <property type="project" value="UniProtKB-SubCell"/>
</dbReference>
<dbReference type="GO" id="GO:0051321">
    <property type="term" value="P:meiotic cell cycle"/>
    <property type="evidence" value="ECO:0007669"/>
    <property type="project" value="UniProtKB-KW"/>
</dbReference>
<protein>
    <recommendedName>
        <fullName>Meiotically up-regulated gene 4 protein</fullName>
    </recommendedName>
</protein>
<reference key="1">
    <citation type="journal article" date="2002" name="Nature">
        <title>The genome sequence of Schizosaccharomyces pombe.</title>
        <authorList>
            <person name="Wood V."/>
            <person name="Gwilliam R."/>
            <person name="Rajandream M.A."/>
            <person name="Lyne M.H."/>
            <person name="Lyne R."/>
            <person name="Stewart A."/>
            <person name="Sgouros J.G."/>
            <person name="Peat N."/>
            <person name="Hayles J."/>
            <person name="Baker S.G."/>
            <person name="Basham D."/>
            <person name="Bowman S."/>
            <person name="Brooks K."/>
            <person name="Brown D."/>
            <person name="Brown S."/>
            <person name="Chillingworth T."/>
            <person name="Churcher C.M."/>
            <person name="Collins M."/>
            <person name="Connor R."/>
            <person name="Cronin A."/>
            <person name="Davis P."/>
            <person name="Feltwell T."/>
            <person name="Fraser A."/>
            <person name="Gentles S."/>
            <person name="Goble A."/>
            <person name="Hamlin N."/>
            <person name="Harris D.E."/>
            <person name="Hidalgo J."/>
            <person name="Hodgson G."/>
            <person name="Holroyd S."/>
            <person name="Hornsby T."/>
            <person name="Howarth S."/>
            <person name="Huckle E.J."/>
            <person name="Hunt S."/>
            <person name="Jagels K."/>
            <person name="James K.D."/>
            <person name="Jones L."/>
            <person name="Jones M."/>
            <person name="Leather S."/>
            <person name="McDonald S."/>
            <person name="McLean J."/>
            <person name="Mooney P."/>
            <person name="Moule S."/>
            <person name="Mungall K.L."/>
            <person name="Murphy L.D."/>
            <person name="Niblett D."/>
            <person name="Odell C."/>
            <person name="Oliver K."/>
            <person name="O'Neil S."/>
            <person name="Pearson D."/>
            <person name="Quail M.A."/>
            <person name="Rabbinowitsch E."/>
            <person name="Rutherford K.M."/>
            <person name="Rutter S."/>
            <person name="Saunders D."/>
            <person name="Seeger K."/>
            <person name="Sharp S."/>
            <person name="Skelton J."/>
            <person name="Simmonds M.N."/>
            <person name="Squares R."/>
            <person name="Squares S."/>
            <person name="Stevens K."/>
            <person name="Taylor K."/>
            <person name="Taylor R.G."/>
            <person name="Tivey A."/>
            <person name="Walsh S.V."/>
            <person name="Warren T."/>
            <person name="Whitehead S."/>
            <person name="Woodward J.R."/>
            <person name="Volckaert G."/>
            <person name="Aert R."/>
            <person name="Robben J."/>
            <person name="Grymonprez B."/>
            <person name="Weltjens I."/>
            <person name="Vanstreels E."/>
            <person name="Rieger M."/>
            <person name="Schaefer M."/>
            <person name="Mueller-Auer S."/>
            <person name="Gabel C."/>
            <person name="Fuchs M."/>
            <person name="Duesterhoeft A."/>
            <person name="Fritzc C."/>
            <person name="Holzer E."/>
            <person name="Moestl D."/>
            <person name="Hilbert H."/>
            <person name="Borzym K."/>
            <person name="Langer I."/>
            <person name="Beck A."/>
            <person name="Lehrach H."/>
            <person name="Reinhardt R."/>
            <person name="Pohl T.M."/>
            <person name="Eger P."/>
            <person name="Zimmermann W."/>
            <person name="Wedler H."/>
            <person name="Wambutt R."/>
            <person name="Purnelle B."/>
            <person name="Goffeau A."/>
            <person name="Cadieu E."/>
            <person name="Dreano S."/>
            <person name="Gloux S."/>
            <person name="Lelaure V."/>
            <person name="Mottier S."/>
            <person name="Galibert F."/>
            <person name="Aves S.J."/>
            <person name="Xiang Z."/>
            <person name="Hunt C."/>
            <person name="Moore K."/>
            <person name="Hurst S.M."/>
            <person name="Lucas M."/>
            <person name="Rochet M."/>
            <person name="Gaillardin C."/>
            <person name="Tallada V.A."/>
            <person name="Garzon A."/>
            <person name="Thode G."/>
            <person name="Daga R.R."/>
            <person name="Cruzado L."/>
            <person name="Jimenez J."/>
            <person name="Sanchez M."/>
            <person name="del Rey F."/>
            <person name="Benito J."/>
            <person name="Dominguez A."/>
            <person name="Revuelta J.L."/>
            <person name="Moreno S."/>
            <person name="Armstrong J."/>
            <person name="Forsburg S.L."/>
            <person name="Cerutti L."/>
            <person name="Lowe T."/>
            <person name="McCombie W.R."/>
            <person name="Paulsen I."/>
            <person name="Potashkin J."/>
            <person name="Shpakovski G.V."/>
            <person name="Ussery D."/>
            <person name="Barrell B.G."/>
            <person name="Nurse P."/>
        </authorList>
    </citation>
    <scope>NUCLEOTIDE SEQUENCE [LARGE SCALE GENOMIC DNA]</scope>
    <source>
        <strain>972 / ATCC 24843</strain>
    </source>
</reference>
<reference key="2">
    <citation type="journal article" date="2005" name="Curr. Biol.">
        <title>Hrs1p/Mcp6p on the meiotic SPB organizes astral microtubule arrays for oscillatory nuclear movement.</title>
        <authorList>
            <person name="Tanaka K."/>
            <person name="Kohda T."/>
            <person name="Yamashita A."/>
            <person name="Nonaka N."/>
            <person name="Yamamoto M."/>
        </authorList>
    </citation>
    <scope>INTERACTION WITH MCP6</scope>
</reference>
<accession>O94719</accession>
<feature type="chain" id="PRO_0000278485" description="Meiotically up-regulated gene 4 protein">
    <location>
        <begin position="1"/>
        <end position="845"/>
    </location>
</feature>
<feature type="transmembrane region" description="Helical" evidence="1">
    <location>
        <begin position="726"/>
        <end position="746"/>
    </location>
</feature>
<feature type="region of interest" description="Disordered" evidence="2">
    <location>
        <begin position="122"/>
        <end position="158"/>
    </location>
</feature>
<feature type="compositionally biased region" description="Low complexity" evidence="2">
    <location>
        <begin position="132"/>
        <end position="145"/>
    </location>
</feature>
<gene>
    <name type="primary">mug4</name>
    <name type="ORF">SPCC1393.07c</name>
</gene>
<evidence type="ECO:0000255" key="1"/>
<evidence type="ECO:0000256" key="2">
    <source>
        <dbReference type="SAM" id="MobiDB-lite"/>
    </source>
</evidence>
<evidence type="ECO:0000305" key="3"/>
<comment type="function">
    <text>Has a role in meiosis.</text>
</comment>
<comment type="subcellular location">
    <subcellularLocation>
        <location evidence="3">Membrane</location>
        <topology evidence="3">Single-pass membrane protein</topology>
    </subcellularLocation>
</comment>
<sequence>MTPPSSSSHFPSPSSANNDFHSLSLEAHGSLSDKFISQFRLNYTIIPIAQKSNISLPFLTLSPCSFTICSLRARLHSLHGPSTVFLKRETSQISARVNDENGFTASPSFFSVDCFDELFPTLSTTDEQPKEPSIISISSSSSDPSSSPPPSSSLLKTPDNDFCARPETFVKSDTADIKLQIHQNNLVLTFLDTTTVSKVNIVLEIHIPVLRDFVTFEQYIPLMFLPSPFETILSFDNLKSDSPSSDLHLGWDHTVSKESMSQSIAEVLNPYNKGVSRSLNDATNMETYHWSPFPPQFSTFNDNALRLRIYYKPKSWLPKNSSCSLSVDVKATLLETTPPSCEVSYNLLLTCRSSNRFRLFPASTPNSNGLCRNDSKCRFLMILPETIIKSPSSFIGDSYNIANIDPPSSMNVQSSEFRVGEVQSFTTNTSSFAFTFKEIVQLGSKASVPMILFPAPSNYKLTIEKPPFPCDLTIPHTAINDSWLPMKLKETNAISYYRKTCSSCKYPFQFFINKLPFYQSPSLPLSATYVWIASALLSVQPGNGSFNIMLSLKFVSSMKPGTELLTIKQPKSSLLNWGLVNGYPKTEGRIVLLPRNDIVLIQADQPTSVFDLCWTIKPTYEKSSNFSCLQLPIPVLNTPILTPVTINIQSTTYYLIGYANQNSKKTLDQPTSLLVLGCKAKNVSELILSYLPEKPIPDGAPIVTNVVETNKTNEAPSSFRKCLQQFLVFLTFTGMTLFILYQLTFPYGVAKDNSSFIDTPLPHSCEMEKSLNVLQHKVLQLQAVNMKLHDYYEKEPTEIYKTVSVTSTQIMPAVTKMSSFELEREQFHKAFGFLRLNRKKDDNAN</sequence>
<name>MUG4_SCHPO</name>
<keyword id="KW-0469">Meiosis</keyword>
<keyword id="KW-0472">Membrane</keyword>
<keyword id="KW-1185">Reference proteome</keyword>
<keyword id="KW-0812">Transmembrane</keyword>
<keyword id="KW-1133">Transmembrane helix</keyword>
<proteinExistence type="evidence at protein level"/>
<organism>
    <name type="scientific">Schizosaccharomyces pombe (strain 972 / ATCC 24843)</name>
    <name type="common">Fission yeast</name>
    <dbReference type="NCBI Taxonomy" id="284812"/>
    <lineage>
        <taxon>Eukaryota</taxon>
        <taxon>Fungi</taxon>
        <taxon>Dikarya</taxon>
        <taxon>Ascomycota</taxon>
        <taxon>Taphrinomycotina</taxon>
        <taxon>Schizosaccharomycetes</taxon>
        <taxon>Schizosaccharomycetales</taxon>
        <taxon>Schizosaccharomycetaceae</taxon>
        <taxon>Schizosaccharomyces</taxon>
    </lineage>
</organism>